<organism>
    <name type="scientific">Methanosphaera stadtmanae (strain ATCC 43021 / DSM 3091 / JCM 11832 / MCB-3)</name>
    <dbReference type="NCBI Taxonomy" id="339860"/>
    <lineage>
        <taxon>Archaea</taxon>
        <taxon>Methanobacteriati</taxon>
        <taxon>Methanobacteriota</taxon>
        <taxon>Methanomada group</taxon>
        <taxon>Methanobacteria</taxon>
        <taxon>Methanobacteriales</taxon>
        <taxon>Methanobacteriaceae</taxon>
        <taxon>Methanosphaera</taxon>
    </lineage>
</organism>
<comment type="function">
    <text evidence="1 2">Transfers an acetyl group from acetyl-CoA to L-homoserine, forming acetyl-L-homoserine.</text>
</comment>
<comment type="catalytic activity">
    <reaction evidence="1 2">
        <text>L-homoserine + acetyl-CoA = O-acetyl-L-homoserine + CoA</text>
        <dbReference type="Rhea" id="RHEA:13701"/>
        <dbReference type="ChEBI" id="CHEBI:57287"/>
        <dbReference type="ChEBI" id="CHEBI:57288"/>
        <dbReference type="ChEBI" id="CHEBI:57476"/>
        <dbReference type="ChEBI" id="CHEBI:57716"/>
        <dbReference type="EC" id="2.3.1.31"/>
    </reaction>
</comment>
<comment type="pathway">
    <text evidence="1">Amino-acid biosynthesis; L-methionine biosynthesis via de novo pathway; O-acetyl-L-homoserine from L-homoserine: step 1/1.</text>
</comment>
<comment type="subunit">
    <text evidence="1">Homodimer.</text>
</comment>
<comment type="subcellular location">
    <subcellularLocation>
        <location evidence="1">Cytoplasm</location>
    </subcellularLocation>
</comment>
<comment type="similarity">
    <text evidence="1">Belongs to the AB hydrolase superfamily. MetX family.</text>
</comment>
<protein>
    <recommendedName>
        <fullName evidence="1">Homoserine O-acetyltransferase</fullName>
        <shortName evidence="1 3">HAT</shortName>
        <ecNumber evidence="1 2">2.3.1.31</ecNumber>
    </recommendedName>
    <alternativeName>
        <fullName evidence="1">Homoserine transacetylase</fullName>
        <shortName evidence="1">HTA</shortName>
    </alternativeName>
</protein>
<proteinExistence type="evidence at protein level"/>
<keyword id="KW-0012">Acyltransferase</keyword>
<keyword id="KW-0028">Amino-acid biosynthesis</keyword>
<keyword id="KW-0129">CBS domain</keyword>
<keyword id="KW-0963">Cytoplasm</keyword>
<keyword id="KW-0486">Methionine biosynthesis</keyword>
<keyword id="KW-1185">Reference proteome</keyword>
<keyword id="KW-0677">Repeat</keyword>
<keyword id="KW-0808">Transferase</keyword>
<evidence type="ECO:0000255" key="1">
    <source>
        <dbReference type="HAMAP-Rule" id="MF_00296"/>
    </source>
</evidence>
<evidence type="ECO:0000269" key="2">
    <source>
    </source>
</evidence>
<evidence type="ECO:0000303" key="3">
    <source>
    </source>
</evidence>
<evidence type="ECO:0000312" key="4">
    <source>
        <dbReference type="EMBL" id="ABC57074.1"/>
    </source>
</evidence>
<sequence>MTYKKSLGNVSTKYYKMKEDLQLDTGNILETPTIAYETYGKLNNEKSNVILVCHALTGDAHAAGWHDGDKKPGWWNIIIGPGKPLDTNRYFIICSNVLGSCKGTTGPCDINPKTNKPYGLDFPIITINDMVKAQKKLLDYLDINHLYAVVGGSMGGMQVLQWTITYPDMVRNAIMIASGAYSTPQQIAFNAVQRRSIIEDPNWKGGKYYEEGVSPEQGLSVARMIAHITYLSNESMYEKFGRKLQDKNKFSYDFSTEFQVESYLEHQGSTFTKKFDANSYLYLTKALDYFEVRKNTSLEEALKPVKSRILIMSITSDWLYTHEHMEEIVMALRANNVEVSYSRLNSEYGHDAFLIENGQMNYIISNFLSKARVKDVMSHTTLTLDYTADIKEAAELMMNCNKTHIPIVDDGKEIVGIITAWDLSKAIATDANSIDDIMTKNVLTCTEYDSLHKVIRKMKEHNISGLPVIDKNHKVIGSITTAHISNLYEK</sequence>
<name>METXA_METST</name>
<gene>
    <name evidence="1 3" type="primary">metXA</name>
    <name evidence="4" type="synonym">metX</name>
    <name evidence="4" type="ordered locus">Msp_0676</name>
</gene>
<reference key="1">
    <citation type="journal article" date="2006" name="J. Bacteriol.">
        <title>The genome sequence of Methanosphaera stadtmanae reveals why this human intestinal archaeon is restricted to methanol and H2 for methane formation and ATP synthesis.</title>
        <authorList>
            <person name="Fricke W.F."/>
            <person name="Seedorf H."/>
            <person name="Henne A."/>
            <person name="Kruer M."/>
            <person name="Liesegang H."/>
            <person name="Hedderich R."/>
            <person name="Gottschalk G."/>
            <person name="Thauer R.K."/>
        </authorList>
    </citation>
    <scope>NUCLEOTIDE SEQUENCE [LARGE SCALE GENOMIC DNA]</scope>
    <source>
        <strain>ATCC 43021 / DSM 3091 / JCM 11832 / MCB-3</strain>
    </source>
</reference>
<reference key="2">
    <citation type="journal article" date="2017" name="Nat. Chem. Biol.">
        <title>Parallel evolution of non-homologous isofunctional enzymes in methionine biosynthesis.</title>
        <authorList>
            <person name="Bastard K."/>
            <person name="Perret A."/>
            <person name="Mariage A."/>
            <person name="Bessonnet T."/>
            <person name="Pinet-Turpault A."/>
            <person name="Petit J.L."/>
            <person name="Darii E."/>
            <person name="Bazire P."/>
            <person name="Vergne-Vaxelaire C."/>
            <person name="Brewee C."/>
            <person name="Debard A."/>
            <person name="Pellouin V."/>
            <person name="Besnard-Gonnet M."/>
            <person name="Artiguenave F."/>
            <person name="Medigue C."/>
            <person name="Vallenet D."/>
            <person name="Danchin A."/>
            <person name="Zaparucha A."/>
            <person name="Weissenbach J."/>
            <person name="Salanoubat M."/>
            <person name="de Berardinis V."/>
        </authorList>
    </citation>
    <scope>FUNCTION</scope>
    <scope>CATALYTIC ACTIVITY</scope>
</reference>
<accession>Q2NGH9</accession>
<dbReference type="EC" id="2.3.1.31" evidence="1 2"/>
<dbReference type="EMBL" id="CP000102">
    <property type="protein sequence ID" value="ABC57074.1"/>
    <property type="molecule type" value="Genomic_DNA"/>
</dbReference>
<dbReference type="RefSeq" id="WP_011406274.1">
    <property type="nucleotide sequence ID" value="NC_007681.1"/>
</dbReference>
<dbReference type="SMR" id="Q2NGH9"/>
<dbReference type="STRING" id="339860.Msp_0676"/>
<dbReference type="ESTHER" id="metst-q2ngh9">
    <property type="family name" value="Homoserine_transacetylase"/>
</dbReference>
<dbReference type="KEGG" id="mst:Msp_0676"/>
<dbReference type="eggNOG" id="arCOG00627">
    <property type="taxonomic scope" value="Archaea"/>
</dbReference>
<dbReference type="HOGENOM" id="CLU_028760_1_1_2"/>
<dbReference type="OrthoDB" id="295172at2157"/>
<dbReference type="UniPathway" id="UPA00051">
    <property type="reaction ID" value="UER00074"/>
</dbReference>
<dbReference type="Proteomes" id="UP000001931">
    <property type="component" value="Chromosome"/>
</dbReference>
<dbReference type="GO" id="GO:0005737">
    <property type="term" value="C:cytoplasm"/>
    <property type="evidence" value="ECO:0007669"/>
    <property type="project" value="UniProtKB-SubCell"/>
</dbReference>
<dbReference type="GO" id="GO:0004414">
    <property type="term" value="F:homoserine O-acetyltransferase activity"/>
    <property type="evidence" value="ECO:0007669"/>
    <property type="project" value="UniProtKB-UniRule"/>
</dbReference>
<dbReference type="GO" id="GO:0009092">
    <property type="term" value="P:homoserine metabolic process"/>
    <property type="evidence" value="ECO:0007669"/>
    <property type="project" value="TreeGrafter"/>
</dbReference>
<dbReference type="GO" id="GO:0009086">
    <property type="term" value="P:methionine biosynthetic process"/>
    <property type="evidence" value="ECO:0007669"/>
    <property type="project" value="UniProtKB-UniRule"/>
</dbReference>
<dbReference type="FunFam" id="1.10.1740.110:FF:000001">
    <property type="entry name" value="Homoserine O-acetyltransferase"/>
    <property type="match status" value="1"/>
</dbReference>
<dbReference type="Gene3D" id="1.10.1740.110">
    <property type="match status" value="1"/>
</dbReference>
<dbReference type="Gene3D" id="3.40.50.1820">
    <property type="entry name" value="alpha/beta hydrolase"/>
    <property type="match status" value="1"/>
</dbReference>
<dbReference type="Gene3D" id="3.10.580.10">
    <property type="entry name" value="CBS-domain"/>
    <property type="match status" value="1"/>
</dbReference>
<dbReference type="HAMAP" id="MF_00296">
    <property type="entry name" value="MetX_acyltransf"/>
    <property type="match status" value="1"/>
</dbReference>
<dbReference type="InterPro" id="IPR000073">
    <property type="entry name" value="AB_hydrolase_1"/>
</dbReference>
<dbReference type="InterPro" id="IPR029058">
    <property type="entry name" value="AB_hydrolase_fold"/>
</dbReference>
<dbReference type="InterPro" id="IPR000644">
    <property type="entry name" value="CBS_dom"/>
</dbReference>
<dbReference type="InterPro" id="IPR046342">
    <property type="entry name" value="CBS_dom_sf"/>
</dbReference>
<dbReference type="InterPro" id="IPR008220">
    <property type="entry name" value="HAT_MetX-like"/>
</dbReference>
<dbReference type="NCBIfam" id="TIGR01392">
    <property type="entry name" value="homoserO_Ac_trn"/>
    <property type="match status" value="1"/>
</dbReference>
<dbReference type="NCBIfam" id="NF001209">
    <property type="entry name" value="PRK00175.1"/>
    <property type="match status" value="1"/>
</dbReference>
<dbReference type="PANTHER" id="PTHR32268">
    <property type="entry name" value="HOMOSERINE O-ACETYLTRANSFERASE"/>
    <property type="match status" value="1"/>
</dbReference>
<dbReference type="PANTHER" id="PTHR32268:SF11">
    <property type="entry name" value="HOMOSERINE O-ACETYLTRANSFERASE"/>
    <property type="match status" value="1"/>
</dbReference>
<dbReference type="Pfam" id="PF00561">
    <property type="entry name" value="Abhydrolase_1"/>
    <property type="match status" value="1"/>
</dbReference>
<dbReference type="Pfam" id="PF00571">
    <property type="entry name" value="CBS"/>
    <property type="match status" value="2"/>
</dbReference>
<dbReference type="SMART" id="SM00116">
    <property type="entry name" value="CBS"/>
    <property type="match status" value="2"/>
</dbReference>
<dbReference type="SUPFAM" id="SSF53474">
    <property type="entry name" value="alpha/beta-Hydrolases"/>
    <property type="match status" value="1"/>
</dbReference>
<dbReference type="SUPFAM" id="SSF54631">
    <property type="entry name" value="CBS-domain pair"/>
    <property type="match status" value="1"/>
</dbReference>
<dbReference type="PROSITE" id="PS51371">
    <property type="entry name" value="CBS"/>
    <property type="match status" value="2"/>
</dbReference>
<feature type="chain" id="PRO_0000440293" description="Homoserine O-acetyltransferase">
    <location>
        <begin position="1"/>
        <end position="490"/>
    </location>
</feature>
<feature type="domain" description="AB hydrolase-1" evidence="1">
    <location>
        <begin position="48"/>
        <end position="354"/>
    </location>
</feature>
<feature type="domain" description="CBS 1" evidence="1">
    <location>
        <begin position="377"/>
        <end position="434"/>
    </location>
</feature>
<feature type="domain" description="CBS 2" evidence="1">
    <location>
        <begin position="438"/>
        <end position="490"/>
    </location>
</feature>
<feature type="active site" description="Nucleophile" evidence="1">
    <location>
        <position position="153"/>
    </location>
</feature>
<feature type="active site" evidence="1">
    <location>
        <position position="317"/>
    </location>
</feature>
<feature type="active site" evidence="1">
    <location>
        <position position="350"/>
    </location>
</feature>
<feature type="binding site" evidence="1">
    <location>
        <position position="223"/>
    </location>
    <ligand>
        <name>substrate</name>
    </ligand>
</feature>
<feature type="binding site" evidence="1">
    <location>
        <position position="351"/>
    </location>
    <ligand>
        <name>substrate</name>
    </ligand>
</feature>